<dbReference type="EC" id="2.7.7.-" evidence="1"/>
<dbReference type="EC" id="2.7.7.108" evidence="1"/>
<dbReference type="EMBL" id="CP001113">
    <property type="protein sequence ID" value="ACF63420.1"/>
    <property type="molecule type" value="Genomic_DNA"/>
</dbReference>
<dbReference type="RefSeq" id="WP_000175677.1">
    <property type="nucleotide sequence ID" value="NZ_CCMR01000003.1"/>
</dbReference>
<dbReference type="SMR" id="B4T4P0"/>
<dbReference type="KEGG" id="see:SNSL254_A1456"/>
<dbReference type="HOGENOM" id="CLU_010245_4_0_6"/>
<dbReference type="Proteomes" id="UP000008824">
    <property type="component" value="Chromosome"/>
</dbReference>
<dbReference type="GO" id="GO:0070733">
    <property type="term" value="F:AMPylase activity"/>
    <property type="evidence" value="ECO:0007669"/>
    <property type="project" value="RHEA"/>
</dbReference>
<dbReference type="GO" id="GO:0005524">
    <property type="term" value="F:ATP binding"/>
    <property type="evidence" value="ECO:0007669"/>
    <property type="project" value="UniProtKB-UniRule"/>
</dbReference>
<dbReference type="GO" id="GO:0000287">
    <property type="term" value="F:magnesium ion binding"/>
    <property type="evidence" value="ECO:0007669"/>
    <property type="project" value="UniProtKB-UniRule"/>
</dbReference>
<dbReference type="HAMAP" id="MF_00692">
    <property type="entry name" value="YdiU_SelO"/>
    <property type="match status" value="1"/>
</dbReference>
<dbReference type="InterPro" id="IPR054838">
    <property type="entry name" value="adnlytase_SelO"/>
</dbReference>
<dbReference type="InterPro" id="IPR003846">
    <property type="entry name" value="SelO"/>
</dbReference>
<dbReference type="NCBIfam" id="NF040880">
    <property type="entry name" value="adnlytase_SelO"/>
    <property type="match status" value="1"/>
</dbReference>
<dbReference type="NCBIfam" id="NF000658">
    <property type="entry name" value="PRK00029.1"/>
    <property type="match status" value="1"/>
</dbReference>
<dbReference type="PANTHER" id="PTHR32057">
    <property type="entry name" value="PROTEIN ADENYLYLTRANSFERASE SELO, MITOCHONDRIAL"/>
    <property type="match status" value="1"/>
</dbReference>
<dbReference type="PANTHER" id="PTHR32057:SF14">
    <property type="entry name" value="PROTEIN ADENYLYLTRANSFERASE SELO, MITOCHONDRIAL"/>
    <property type="match status" value="1"/>
</dbReference>
<dbReference type="Pfam" id="PF02696">
    <property type="entry name" value="SelO"/>
    <property type="match status" value="1"/>
</dbReference>
<protein>
    <recommendedName>
        <fullName evidence="1">Protein nucleotidyltransferase YdiU</fullName>
        <ecNumber evidence="1">2.7.7.-</ecNumber>
    </recommendedName>
    <alternativeName>
        <fullName evidence="1">Protein adenylyltransferase YdiU</fullName>
        <ecNumber evidence="1">2.7.7.108</ecNumber>
    </alternativeName>
    <alternativeName>
        <fullName evidence="1">Protein uridylyltransferase YdiU</fullName>
        <ecNumber evidence="1">2.7.7.-</ecNumber>
    </alternativeName>
</protein>
<evidence type="ECO:0000255" key="1">
    <source>
        <dbReference type="HAMAP-Rule" id="MF_00692"/>
    </source>
</evidence>
<feature type="chain" id="PRO_1000132126" description="Protein nucleotidyltransferase YdiU">
    <location>
        <begin position="1"/>
        <end position="480"/>
    </location>
</feature>
<feature type="active site" description="Proton acceptor" evidence="1">
    <location>
        <position position="248"/>
    </location>
</feature>
<feature type="binding site" evidence="1">
    <location>
        <position position="86"/>
    </location>
    <ligand>
        <name>ATP</name>
        <dbReference type="ChEBI" id="CHEBI:30616"/>
    </ligand>
</feature>
<feature type="binding site" evidence="1">
    <location>
        <position position="88"/>
    </location>
    <ligand>
        <name>ATP</name>
        <dbReference type="ChEBI" id="CHEBI:30616"/>
    </ligand>
</feature>
<feature type="binding site" evidence="1">
    <location>
        <position position="89"/>
    </location>
    <ligand>
        <name>ATP</name>
        <dbReference type="ChEBI" id="CHEBI:30616"/>
    </ligand>
</feature>
<feature type="binding site" evidence="1">
    <location>
        <position position="109"/>
    </location>
    <ligand>
        <name>ATP</name>
        <dbReference type="ChEBI" id="CHEBI:30616"/>
    </ligand>
</feature>
<feature type="binding site" evidence="1">
    <location>
        <position position="121"/>
    </location>
    <ligand>
        <name>ATP</name>
        <dbReference type="ChEBI" id="CHEBI:30616"/>
    </ligand>
</feature>
<feature type="binding site" evidence="1">
    <location>
        <position position="122"/>
    </location>
    <ligand>
        <name>ATP</name>
        <dbReference type="ChEBI" id="CHEBI:30616"/>
    </ligand>
</feature>
<feature type="binding site" evidence="1">
    <location>
        <position position="172"/>
    </location>
    <ligand>
        <name>ATP</name>
        <dbReference type="ChEBI" id="CHEBI:30616"/>
    </ligand>
</feature>
<feature type="binding site" evidence="1">
    <location>
        <position position="179"/>
    </location>
    <ligand>
        <name>ATP</name>
        <dbReference type="ChEBI" id="CHEBI:30616"/>
    </ligand>
</feature>
<feature type="binding site" evidence="1">
    <location>
        <position position="249"/>
    </location>
    <ligand>
        <name>Mg(2+)</name>
        <dbReference type="ChEBI" id="CHEBI:18420"/>
    </ligand>
</feature>
<feature type="binding site" evidence="1">
    <location>
        <position position="258"/>
    </location>
    <ligand>
        <name>ATP</name>
        <dbReference type="ChEBI" id="CHEBI:30616"/>
    </ligand>
</feature>
<feature type="binding site" evidence="1">
    <location>
        <position position="258"/>
    </location>
    <ligand>
        <name>Mg(2+)</name>
        <dbReference type="ChEBI" id="CHEBI:18420"/>
    </ligand>
</feature>
<reference key="1">
    <citation type="journal article" date="2011" name="J. Bacteriol.">
        <title>Comparative genomics of 28 Salmonella enterica isolates: evidence for CRISPR-mediated adaptive sublineage evolution.</title>
        <authorList>
            <person name="Fricke W.F."/>
            <person name="Mammel M.K."/>
            <person name="McDermott P.F."/>
            <person name="Tartera C."/>
            <person name="White D.G."/>
            <person name="Leclerc J.E."/>
            <person name="Ravel J."/>
            <person name="Cebula T.A."/>
        </authorList>
    </citation>
    <scope>NUCLEOTIDE SEQUENCE [LARGE SCALE GENOMIC DNA]</scope>
    <source>
        <strain>SL254</strain>
    </source>
</reference>
<name>SELO_SALNS</name>
<accession>B4T4P0</accession>
<comment type="function">
    <text evidence="1">Nucleotidyltransferase involved in the post-translational modification of proteins. It can catalyze the addition of adenosine monophosphate (AMP) or uridine monophosphate (UMP) to a protein, resulting in modifications known as AMPylation and UMPylation.</text>
</comment>
<comment type="catalytic activity">
    <reaction evidence="1">
        <text>L-seryl-[protein] + ATP = 3-O-(5'-adenylyl)-L-seryl-[protein] + diphosphate</text>
        <dbReference type="Rhea" id="RHEA:58120"/>
        <dbReference type="Rhea" id="RHEA-COMP:9863"/>
        <dbReference type="Rhea" id="RHEA-COMP:15073"/>
        <dbReference type="ChEBI" id="CHEBI:29999"/>
        <dbReference type="ChEBI" id="CHEBI:30616"/>
        <dbReference type="ChEBI" id="CHEBI:33019"/>
        <dbReference type="ChEBI" id="CHEBI:142516"/>
        <dbReference type="EC" id="2.7.7.108"/>
    </reaction>
</comment>
<comment type="catalytic activity">
    <reaction evidence="1">
        <text>L-threonyl-[protein] + ATP = 3-O-(5'-adenylyl)-L-threonyl-[protein] + diphosphate</text>
        <dbReference type="Rhea" id="RHEA:54292"/>
        <dbReference type="Rhea" id="RHEA-COMP:11060"/>
        <dbReference type="Rhea" id="RHEA-COMP:13847"/>
        <dbReference type="ChEBI" id="CHEBI:30013"/>
        <dbReference type="ChEBI" id="CHEBI:30616"/>
        <dbReference type="ChEBI" id="CHEBI:33019"/>
        <dbReference type="ChEBI" id="CHEBI:138113"/>
        <dbReference type="EC" id="2.7.7.108"/>
    </reaction>
</comment>
<comment type="catalytic activity">
    <reaction evidence="1">
        <text>L-tyrosyl-[protein] + ATP = O-(5'-adenylyl)-L-tyrosyl-[protein] + diphosphate</text>
        <dbReference type="Rhea" id="RHEA:54288"/>
        <dbReference type="Rhea" id="RHEA-COMP:10136"/>
        <dbReference type="Rhea" id="RHEA-COMP:13846"/>
        <dbReference type="ChEBI" id="CHEBI:30616"/>
        <dbReference type="ChEBI" id="CHEBI:33019"/>
        <dbReference type="ChEBI" id="CHEBI:46858"/>
        <dbReference type="ChEBI" id="CHEBI:83624"/>
        <dbReference type="EC" id="2.7.7.108"/>
    </reaction>
</comment>
<comment type="catalytic activity">
    <reaction evidence="1">
        <text>L-histidyl-[protein] + UTP = N(tele)-(5'-uridylyl)-L-histidyl-[protein] + diphosphate</text>
        <dbReference type="Rhea" id="RHEA:83891"/>
        <dbReference type="Rhea" id="RHEA-COMP:9745"/>
        <dbReference type="Rhea" id="RHEA-COMP:20239"/>
        <dbReference type="ChEBI" id="CHEBI:29979"/>
        <dbReference type="ChEBI" id="CHEBI:33019"/>
        <dbReference type="ChEBI" id="CHEBI:46398"/>
        <dbReference type="ChEBI" id="CHEBI:233474"/>
    </reaction>
</comment>
<comment type="catalytic activity">
    <reaction evidence="1">
        <text>L-seryl-[protein] + UTP = O-(5'-uridylyl)-L-seryl-[protein] + diphosphate</text>
        <dbReference type="Rhea" id="RHEA:64604"/>
        <dbReference type="Rhea" id="RHEA-COMP:9863"/>
        <dbReference type="Rhea" id="RHEA-COMP:16635"/>
        <dbReference type="ChEBI" id="CHEBI:29999"/>
        <dbReference type="ChEBI" id="CHEBI:33019"/>
        <dbReference type="ChEBI" id="CHEBI:46398"/>
        <dbReference type="ChEBI" id="CHEBI:156051"/>
    </reaction>
</comment>
<comment type="catalytic activity">
    <reaction evidence="1">
        <text>L-tyrosyl-[protein] + UTP = O-(5'-uridylyl)-L-tyrosyl-[protein] + diphosphate</text>
        <dbReference type="Rhea" id="RHEA:83887"/>
        <dbReference type="Rhea" id="RHEA-COMP:10136"/>
        <dbReference type="Rhea" id="RHEA-COMP:20238"/>
        <dbReference type="ChEBI" id="CHEBI:33019"/>
        <dbReference type="ChEBI" id="CHEBI:46398"/>
        <dbReference type="ChEBI" id="CHEBI:46858"/>
        <dbReference type="ChEBI" id="CHEBI:90602"/>
    </reaction>
</comment>
<comment type="cofactor">
    <cofactor evidence="1">
        <name>Mg(2+)</name>
        <dbReference type="ChEBI" id="CHEBI:18420"/>
    </cofactor>
    <cofactor evidence="1">
        <name>Mn(2+)</name>
        <dbReference type="ChEBI" id="CHEBI:29035"/>
    </cofactor>
</comment>
<comment type="similarity">
    <text evidence="1">Belongs to the SELO family.</text>
</comment>
<keyword id="KW-0067">ATP-binding</keyword>
<keyword id="KW-0460">Magnesium</keyword>
<keyword id="KW-0464">Manganese</keyword>
<keyword id="KW-0479">Metal-binding</keyword>
<keyword id="KW-0547">Nucleotide-binding</keyword>
<keyword id="KW-0548">Nucleotidyltransferase</keyword>
<keyword id="KW-0808">Transferase</keyword>
<gene>
    <name evidence="1" type="primary">ydiU</name>
    <name evidence="1" type="synonym">selO</name>
    <name type="ordered locus">SNSL254_A1456</name>
</gene>
<organism>
    <name type="scientific">Salmonella newport (strain SL254)</name>
    <dbReference type="NCBI Taxonomy" id="423368"/>
    <lineage>
        <taxon>Bacteria</taxon>
        <taxon>Pseudomonadati</taxon>
        <taxon>Pseudomonadota</taxon>
        <taxon>Gammaproteobacteria</taxon>
        <taxon>Enterobacterales</taxon>
        <taxon>Enterobacteriaceae</taxon>
        <taxon>Salmonella</taxon>
    </lineage>
</organism>
<proteinExistence type="inferred from homology"/>
<sequence>MTLSFTARWRDELPATYTALLPTPLKNARLIWYNDKLAQQLAIPASLFDATNGAGVWGGETLLPGMSPVAQVYSGHQFGVWAGQLGDGRGILLGEQLLADGSTLDWHLKGAGLTPYSRMGDGRAVLRSTIRESLASEAMHYLGIPTTRALSIVASDTPVQRETQETGAMLMRLAQSHMRFGHFEHFYYRREPEKVQQLADFAIRHYWPQWQDVAEKYALWFEEVAARTGRLIAEWQTVGFAHGVMNTDNMSILGLTIDYGPFGFLDDYDPGFIGNHSDHQGRYRFDNQPSVALWNLQRLAQTLTPFIEIDALNRALDRYQDALLTHYGQRMRQKLGFFTEQKDDNALLNELFSLMAREGSDYTRTFRMLSHTEQQSASSPLRDTFIDRAAFDAWFDHYRARLRTEAVDDALRQQQMQRVNPAIVLRNWLAQRAIDAAEQGDMAELHRLHEVLRQPFTDRDDDYASRPPEWGKRLEVSCSS</sequence>